<name>RPOA_SHESM</name>
<proteinExistence type="inferred from homology"/>
<evidence type="ECO:0000255" key="1">
    <source>
        <dbReference type="HAMAP-Rule" id="MF_00059"/>
    </source>
</evidence>
<comment type="function">
    <text evidence="1">DNA-dependent RNA polymerase catalyzes the transcription of DNA into RNA using the four ribonucleoside triphosphates as substrates.</text>
</comment>
<comment type="catalytic activity">
    <reaction evidence="1">
        <text>RNA(n) + a ribonucleoside 5'-triphosphate = RNA(n+1) + diphosphate</text>
        <dbReference type="Rhea" id="RHEA:21248"/>
        <dbReference type="Rhea" id="RHEA-COMP:14527"/>
        <dbReference type="Rhea" id="RHEA-COMP:17342"/>
        <dbReference type="ChEBI" id="CHEBI:33019"/>
        <dbReference type="ChEBI" id="CHEBI:61557"/>
        <dbReference type="ChEBI" id="CHEBI:140395"/>
        <dbReference type="EC" id="2.7.7.6"/>
    </reaction>
</comment>
<comment type="subunit">
    <text evidence="1">Homodimer. The RNAP catalytic core consists of 2 alpha, 1 beta, 1 beta' and 1 omega subunit. When a sigma factor is associated with the core the holoenzyme is formed, which can initiate transcription.</text>
</comment>
<comment type="domain">
    <text evidence="1">The N-terminal domain is essential for RNAP assembly and basal transcription, whereas the C-terminal domain is involved in interaction with transcriptional regulators and with upstream promoter elements.</text>
</comment>
<comment type="similarity">
    <text evidence="1">Belongs to the RNA polymerase alpha chain family.</text>
</comment>
<organism>
    <name type="scientific">Shewanella sp. (strain MR-4)</name>
    <dbReference type="NCBI Taxonomy" id="60480"/>
    <lineage>
        <taxon>Bacteria</taxon>
        <taxon>Pseudomonadati</taxon>
        <taxon>Pseudomonadota</taxon>
        <taxon>Gammaproteobacteria</taxon>
        <taxon>Alteromonadales</taxon>
        <taxon>Shewanellaceae</taxon>
        <taxon>Shewanella</taxon>
    </lineage>
</organism>
<reference key="1">
    <citation type="submission" date="2006-08" db="EMBL/GenBank/DDBJ databases">
        <title>Complete sequence of Shewanella sp. MR-4.</title>
        <authorList>
            <consortium name="US DOE Joint Genome Institute"/>
            <person name="Copeland A."/>
            <person name="Lucas S."/>
            <person name="Lapidus A."/>
            <person name="Barry K."/>
            <person name="Detter J.C."/>
            <person name="Glavina del Rio T."/>
            <person name="Hammon N."/>
            <person name="Israni S."/>
            <person name="Dalin E."/>
            <person name="Tice H."/>
            <person name="Pitluck S."/>
            <person name="Kiss H."/>
            <person name="Brettin T."/>
            <person name="Bruce D."/>
            <person name="Han C."/>
            <person name="Tapia R."/>
            <person name="Gilna P."/>
            <person name="Schmutz J."/>
            <person name="Larimer F."/>
            <person name="Land M."/>
            <person name="Hauser L."/>
            <person name="Kyrpides N."/>
            <person name="Mikhailova N."/>
            <person name="Nealson K."/>
            <person name="Konstantinidis K."/>
            <person name="Klappenbach J."/>
            <person name="Tiedje J."/>
            <person name="Richardson P."/>
        </authorList>
    </citation>
    <scope>NUCLEOTIDE SEQUENCE [LARGE SCALE GENOMIC DNA]</scope>
    <source>
        <strain>MR-4</strain>
    </source>
</reference>
<sequence>MQGSVTEFLKPRLVDIEQVNSTRAKVTLEPLERGFGHTLGNALRRILLSSMPGCAVTEVEIDGVLHEYSSKEGVQEDILEILLNLKGLAVTIEGKDEAMLTLSKSGAGPVIAADITHDGDVTIVNPDHVICHLTGNNDISMRIRVERGRGYVPASARAQTEDDDRPIGRLLVDASFSPVARIAYNVEAARVEQRTDLDKLVIDMTTNGTIDPEEAIRRSATILAEQLDAFVELRDVTEPEMKEEKPEFDPILLRPVDDLELTVRSANCLKAEAIHYIGDLVQRTEVELLKTPNLGKKSLTEIKDVLASRGLSLGMRLENWPPASLADDL</sequence>
<dbReference type="EC" id="2.7.7.6" evidence="1"/>
<dbReference type="EMBL" id="CP000446">
    <property type="protein sequence ID" value="ABI37305.1"/>
    <property type="molecule type" value="Genomic_DNA"/>
</dbReference>
<dbReference type="RefSeq" id="WP_011070632.1">
    <property type="nucleotide sequence ID" value="NC_008321.1"/>
</dbReference>
<dbReference type="SMR" id="Q0HNR2"/>
<dbReference type="GeneID" id="94726211"/>
<dbReference type="KEGG" id="she:Shewmr4_0224"/>
<dbReference type="HOGENOM" id="CLU_053084_0_0_6"/>
<dbReference type="GO" id="GO:0005737">
    <property type="term" value="C:cytoplasm"/>
    <property type="evidence" value="ECO:0007669"/>
    <property type="project" value="UniProtKB-ARBA"/>
</dbReference>
<dbReference type="GO" id="GO:0000428">
    <property type="term" value="C:DNA-directed RNA polymerase complex"/>
    <property type="evidence" value="ECO:0007669"/>
    <property type="project" value="UniProtKB-KW"/>
</dbReference>
<dbReference type="GO" id="GO:0003677">
    <property type="term" value="F:DNA binding"/>
    <property type="evidence" value="ECO:0007669"/>
    <property type="project" value="UniProtKB-UniRule"/>
</dbReference>
<dbReference type="GO" id="GO:0003899">
    <property type="term" value="F:DNA-directed RNA polymerase activity"/>
    <property type="evidence" value="ECO:0007669"/>
    <property type="project" value="UniProtKB-UniRule"/>
</dbReference>
<dbReference type="GO" id="GO:0046983">
    <property type="term" value="F:protein dimerization activity"/>
    <property type="evidence" value="ECO:0007669"/>
    <property type="project" value="InterPro"/>
</dbReference>
<dbReference type="GO" id="GO:0006351">
    <property type="term" value="P:DNA-templated transcription"/>
    <property type="evidence" value="ECO:0007669"/>
    <property type="project" value="UniProtKB-UniRule"/>
</dbReference>
<dbReference type="CDD" id="cd06928">
    <property type="entry name" value="RNAP_alpha_NTD"/>
    <property type="match status" value="1"/>
</dbReference>
<dbReference type="FunFam" id="1.10.150.20:FF:000001">
    <property type="entry name" value="DNA-directed RNA polymerase subunit alpha"/>
    <property type="match status" value="1"/>
</dbReference>
<dbReference type="FunFam" id="2.170.120.12:FF:000001">
    <property type="entry name" value="DNA-directed RNA polymerase subunit alpha"/>
    <property type="match status" value="1"/>
</dbReference>
<dbReference type="Gene3D" id="1.10.150.20">
    <property type="entry name" value="5' to 3' exonuclease, C-terminal subdomain"/>
    <property type="match status" value="1"/>
</dbReference>
<dbReference type="Gene3D" id="2.170.120.12">
    <property type="entry name" value="DNA-directed RNA polymerase, insert domain"/>
    <property type="match status" value="1"/>
</dbReference>
<dbReference type="Gene3D" id="3.30.1360.10">
    <property type="entry name" value="RNA polymerase, RBP11-like subunit"/>
    <property type="match status" value="1"/>
</dbReference>
<dbReference type="HAMAP" id="MF_00059">
    <property type="entry name" value="RNApol_bact_RpoA"/>
    <property type="match status" value="1"/>
</dbReference>
<dbReference type="InterPro" id="IPR011262">
    <property type="entry name" value="DNA-dir_RNA_pol_insert"/>
</dbReference>
<dbReference type="InterPro" id="IPR011263">
    <property type="entry name" value="DNA-dir_RNA_pol_RpoA/D/Rpb3"/>
</dbReference>
<dbReference type="InterPro" id="IPR011773">
    <property type="entry name" value="DNA-dir_RpoA"/>
</dbReference>
<dbReference type="InterPro" id="IPR036603">
    <property type="entry name" value="RBP11-like"/>
</dbReference>
<dbReference type="InterPro" id="IPR011260">
    <property type="entry name" value="RNAP_asu_C"/>
</dbReference>
<dbReference type="InterPro" id="IPR036643">
    <property type="entry name" value="RNApol_insert_sf"/>
</dbReference>
<dbReference type="NCBIfam" id="NF003513">
    <property type="entry name" value="PRK05182.1-2"/>
    <property type="match status" value="1"/>
</dbReference>
<dbReference type="NCBIfam" id="NF003519">
    <property type="entry name" value="PRK05182.2-5"/>
    <property type="match status" value="1"/>
</dbReference>
<dbReference type="NCBIfam" id="TIGR02027">
    <property type="entry name" value="rpoA"/>
    <property type="match status" value="1"/>
</dbReference>
<dbReference type="Pfam" id="PF01000">
    <property type="entry name" value="RNA_pol_A_bac"/>
    <property type="match status" value="1"/>
</dbReference>
<dbReference type="Pfam" id="PF03118">
    <property type="entry name" value="RNA_pol_A_CTD"/>
    <property type="match status" value="1"/>
</dbReference>
<dbReference type="Pfam" id="PF01193">
    <property type="entry name" value="RNA_pol_L"/>
    <property type="match status" value="1"/>
</dbReference>
<dbReference type="SMART" id="SM00662">
    <property type="entry name" value="RPOLD"/>
    <property type="match status" value="1"/>
</dbReference>
<dbReference type="SUPFAM" id="SSF47789">
    <property type="entry name" value="C-terminal domain of RNA polymerase alpha subunit"/>
    <property type="match status" value="1"/>
</dbReference>
<dbReference type="SUPFAM" id="SSF56553">
    <property type="entry name" value="Insert subdomain of RNA polymerase alpha subunit"/>
    <property type="match status" value="1"/>
</dbReference>
<dbReference type="SUPFAM" id="SSF55257">
    <property type="entry name" value="RBP11-like subunits of RNA polymerase"/>
    <property type="match status" value="1"/>
</dbReference>
<protein>
    <recommendedName>
        <fullName evidence="1">DNA-directed RNA polymerase subunit alpha</fullName>
        <shortName evidence="1">RNAP subunit alpha</shortName>
        <ecNumber evidence="1">2.7.7.6</ecNumber>
    </recommendedName>
    <alternativeName>
        <fullName evidence="1">RNA polymerase subunit alpha</fullName>
    </alternativeName>
    <alternativeName>
        <fullName evidence="1">Transcriptase subunit alpha</fullName>
    </alternativeName>
</protein>
<accession>Q0HNR2</accession>
<feature type="chain" id="PRO_0000264545" description="DNA-directed RNA polymerase subunit alpha">
    <location>
        <begin position="1"/>
        <end position="329"/>
    </location>
</feature>
<feature type="region of interest" description="Alpha N-terminal domain (alpha-NTD)" evidence="1">
    <location>
        <begin position="1"/>
        <end position="234"/>
    </location>
</feature>
<feature type="region of interest" description="Alpha C-terminal domain (alpha-CTD)" evidence="1">
    <location>
        <begin position="248"/>
        <end position="329"/>
    </location>
</feature>
<keyword id="KW-0240">DNA-directed RNA polymerase</keyword>
<keyword id="KW-0548">Nucleotidyltransferase</keyword>
<keyword id="KW-0804">Transcription</keyword>
<keyword id="KW-0808">Transferase</keyword>
<gene>
    <name evidence="1" type="primary">rpoA</name>
    <name type="ordered locus">Shewmr4_0224</name>
</gene>